<proteinExistence type="inferred from homology"/>
<name>BIOB_ALIB4</name>
<evidence type="ECO:0000255" key="1">
    <source>
        <dbReference type="HAMAP-Rule" id="MF_01694"/>
    </source>
</evidence>
<evidence type="ECO:0000255" key="2">
    <source>
        <dbReference type="PROSITE-ProRule" id="PRU01266"/>
    </source>
</evidence>
<gene>
    <name evidence="1" type="primary">bioB</name>
    <name type="ordered locus">Abu_2237</name>
</gene>
<comment type="function">
    <text evidence="1">Catalyzes the conversion of dethiobiotin (DTB) to biotin by the insertion of a sulfur atom into dethiobiotin via a radical-based mechanism.</text>
</comment>
<comment type="catalytic activity">
    <reaction evidence="1">
        <text>(4R,5S)-dethiobiotin + (sulfur carrier)-SH + 2 reduced [2Fe-2S]-[ferredoxin] + 2 S-adenosyl-L-methionine = (sulfur carrier)-H + biotin + 2 5'-deoxyadenosine + 2 L-methionine + 2 oxidized [2Fe-2S]-[ferredoxin]</text>
        <dbReference type="Rhea" id="RHEA:22060"/>
        <dbReference type="Rhea" id="RHEA-COMP:10000"/>
        <dbReference type="Rhea" id="RHEA-COMP:10001"/>
        <dbReference type="Rhea" id="RHEA-COMP:14737"/>
        <dbReference type="Rhea" id="RHEA-COMP:14739"/>
        <dbReference type="ChEBI" id="CHEBI:17319"/>
        <dbReference type="ChEBI" id="CHEBI:29917"/>
        <dbReference type="ChEBI" id="CHEBI:33737"/>
        <dbReference type="ChEBI" id="CHEBI:33738"/>
        <dbReference type="ChEBI" id="CHEBI:57586"/>
        <dbReference type="ChEBI" id="CHEBI:57844"/>
        <dbReference type="ChEBI" id="CHEBI:59789"/>
        <dbReference type="ChEBI" id="CHEBI:64428"/>
        <dbReference type="ChEBI" id="CHEBI:149473"/>
        <dbReference type="EC" id="2.8.1.6"/>
    </reaction>
</comment>
<comment type="cofactor">
    <cofactor evidence="1">
        <name>[4Fe-4S] cluster</name>
        <dbReference type="ChEBI" id="CHEBI:49883"/>
    </cofactor>
    <text evidence="1">Binds 1 [4Fe-4S] cluster. The cluster is coordinated with 3 cysteines and an exchangeable S-adenosyl-L-methionine.</text>
</comment>
<comment type="cofactor">
    <cofactor evidence="1">
        <name>[2Fe-2S] cluster</name>
        <dbReference type="ChEBI" id="CHEBI:190135"/>
    </cofactor>
    <text evidence="1">Binds 1 [2Fe-2S] cluster. The cluster is coordinated with 3 cysteines and 1 arginine.</text>
</comment>
<comment type="pathway">
    <text evidence="1">Cofactor biosynthesis; biotin biosynthesis; biotin from 7,8-diaminononanoate: step 2/2.</text>
</comment>
<comment type="subunit">
    <text evidence="1">Homodimer.</text>
</comment>
<comment type="similarity">
    <text evidence="1">Belongs to the radical SAM superfamily. Biotin synthase family.</text>
</comment>
<keyword id="KW-0001">2Fe-2S</keyword>
<keyword id="KW-0004">4Fe-4S</keyword>
<keyword id="KW-0093">Biotin biosynthesis</keyword>
<keyword id="KW-0408">Iron</keyword>
<keyword id="KW-0411">Iron-sulfur</keyword>
<keyword id="KW-0479">Metal-binding</keyword>
<keyword id="KW-1185">Reference proteome</keyword>
<keyword id="KW-0949">S-adenosyl-L-methionine</keyword>
<keyword id="KW-0808">Transferase</keyword>
<protein>
    <recommendedName>
        <fullName evidence="1">Biotin synthase</fullName>
        <ecNumber evidence="1">2.8.1.6</ecNumber>
    </recommendedName>
</protein>
<accession>A8EWX7</accession>
<feature type="chain" id="PRO_0000381207" description="Biotin synthase">
    <location>
        <begin position="1"/>
        <end position="282"/>
    </location>
</feature>
<feature type="domain" description="Radical SAM core" evidence="2">
    <location>
        <begin position="1"/>
        <end position="230"/>
    </location>
</feature>
<feature type="binding site" evidence="1">
    <location>
        <position position="19"/>
    </location>
    <ligand>
        <name>[4Fe-4S] cluster</name>
        <dbReference type="ChEBI" id="CHEBI:49883"/>
        <note>4Fe-4S-S-AdoMet</note>
    </ligand>
</feature>
<feature type="binding site" evidence="1">
    <location>
        <position position="23"/>
    </location>
    <ligand>
        <name>[4Fe-4S] cluster</name>
        <dbReference type="ChEBI" id="CHEBI:49883"/>
        <note>4Fe-4S-S-AdoMet</note>
    </ligand>
</feature>
<feature type="binding site" evidence="1">
    <location>
        <position position="26"/>
    </location>
    <ligand>
        <name>[4Fe-4S] cluster</name>
        <dbReference type="ChEBI" id="CHEBI:49883"/>
        <note>4Fe-4S-S-AdoMet</note>
    </ligand>
</feature>
<feature type="binding site" evidence="1">
    <location>
        <position position="63"/>
    </location>
    <ligand>
        <name>[2Fe-2S] cluster</name>
        <dbReference type="ChEBI" id="CHEBI:190135"/>
    </ligand>
</feature>
<feature type="binding site" evidence="1">
    <location>
        <position position="98"/>
    </location>
    <ligand>
        <name>[2Fe-2S] cluster</name>
        <dbReference type="ChEBI" id="CHEBI:190135"/>
    </ligand>
</feature>
<feature type="binding site" evidence="1">
    <location>
        <position position="156"/>
    </location>
    <ligand>
        <name>[2Fe-2S] cluster</name>
        <dbReference type="ChEBI" id="CHEBI:190135"/>
    </ligand>
</feature>
<dbReference type="EC" id="2.8.1.6" evidence="1"/>
<dbReference type="EMBL" id="CP000361">
    <property type="protein sequence ID" value="ABV68450.1"/>
    <property type="molecule type" value="Genomic_DNA"/>
</dbReference>
<dbReference type="RefSeq" id="WP_012148081.1">
    <property type="nucleotide sequence ID" value="NC_009850.1"/>
</dbReference>
<dbReference type="SMR" id="A8EWX7"/>
<dbReference type="STRING" id="367737.Abu_2237"/>
<dbReference type="GeneID" id="24305133"/>
<dbReference type="KEGG" id="abu:Abu_2237"/>
<dbReference type="eggNOG" id="COG0502">
    <property type="taxonomic scope" value="Bacteria"/>
</dbReference>
<dbReference type="HOGENOM" id="CLU_033172_2_1_7"/>
<dbReference type="UniPathway" id="UPA00078">
    <property type="reaction ID" value="UER00162"/>
</dbReference>
<dbReference type="Proteomes" id="UP000001136">
    <property type="component" value="Chromosome"/>
</dbReference>
<dbReference type="GO" id="GO:0051537">
    <property type="term" value="F:2 iron, 2 sulfur cluster binding"/>
    <property type="evidence" value="ECO:0007669"/>
    <property type="project" value="UniProtKB-KW"/>
</dbReference>
<dbReference type="GO" id="GO:0051539">
    <property type="term" value="F:4 iron, 4 sulfur cluster binding"/>
    <property type="evidence" value="ECO:0007669"/>
    <property type="project" value="UniProtKB-KW"/>
</dbReference>
<dbReference type="GO" id="GO:0004076">
    <property type="term" value="F:biotin synthase activity"/>
    <property type="evidence" value="ECO:0007669"/>
    <property type="project" value="UniProtKB-UniRule"/>
</dbReference>
<dbReference type="GO" id="GO:0005506">
    <property type="term" value="F:iron ion binding"/>
    <property type="evidence" value="ECO:0007669"/>
    <property type="project" value="UniProtKB-UniRule"/>
</dbReference>
<dbReference type="GO" id="GO:0009102">
    <property type="term" value="P:biotin biosynthetic process"/>
    <property type="evidence" value="ECO:0007669"/>
    <property type="project" value="UniProtKB-UniRule"/>
</dbReference>
<dbReference type="CDD" id="cd01335">
    <property type="entry name" value="Radical_SAM"/>
    <property type="match status" value="1"/>
</dbReference>
<dbReference type="Gene3D" id="3.20.20.70">
    <property type="entry name" value="Aldolase class I"/>
    <property type="match status" value="1"/>
</dbReference>
<dbReference type="HAMAP" id="MF_01694">
    <property type="entry name" value="BioB"/>
    <property type="match status" value="1"/>
</dbReference>
<dbReference type="InterPro" id="IPR013785">
    <property type="entry name" value="Aldolase_TIM"/>
</dbReference>
<dbReference type="InterPro" id="IPR010722">
    <property type="entry name" value="BATS_dom"/>
</dbReference>
<dbReference type="InterPro" id="IPR002684">
    <property type="entry name" value="Biotin_synth/BioAB"/>
</dbReference>
<dbReference type="InterPro" id="IPR024177">
    <property type="entry name" value="Biotin_synthase"/>
</dbReference>
<dbReference type="InterPro" id="IPR006638">
    <property type="entry name" value="Elp3/MiaA/NifB-like_rSAM"/>
</dbReference>
<dbReference type="InterPro" id="IPR007197">
    <property type="entry name" value="rSAM"/>
</dbReference>
<dbReference type="NCBIfam" id="TIGR00433">
    <property type="entry name" value="bioB"/>
    <property type="match status" value="1"/>
</dbReference>
<dbReference type="NCBIfam" id="NF006308">
    <property type="entry name" value="PRK08508.1"/>
    <property type="match status" value="1"/>
</dbReference>
<dbReference type="PANTHER" id="PTHR22976">
    <property type="entry name" value="BIOTIN SYNTHASE"/>
    <property type="match status" value="1"/>
</dbReference>
<dbReference type="PANTHER" id="PTHR22976:SF2">
    <property type="entry name" value="BIOTIN SYNTHASE, MITOCHONDRIAL"/>
    <property type="match status" value="1"/>
</dbReference>
<dbReference type="Pfam" id="PF06968">
    <property type="entry name" value="BATS"/>
    <property type="match status" value="1"/>
</dbReference>
<dbReference type="Pfam" id="PF04055">
    <property type="entry name" value="Radical_SAM"/>
    <property type="match status" value="1"/>
</dbReference>
<dbReference type="PIRSF" id="PIRSF001619">
    <property type="entry name" value="Biotin_synth"/>
    <property type="match status" value="1"/>
</dbReference>
<dbReference type="SFLD" id="SFLDG01278">
    <property type="entry name" value="biotin_synthase_like"/>
    <property type="match status" value="1"/>
</dbReference>
<dbReference type="SFLD" id="SFLDS00029">
    <property type="entry name" value="Radical_SAM"/>
    <property type="match status" value="1"/>
</dbReference>
<dbReference type="SMART" id="SM00876">
    <property type="entry name" value="BATS"/>
    <property type="match status" value="1"/>
</dbReference>
<dbReference type="SMART" id="SM00729">
    <property type="entry name" value="Elp3"/>
    <property type="match status" value="1"/>
</dbReference>
<dbReference type="SUPFAM" id="SSF102114">
    <property type="entry name" value="Radical SAM enzymes"/>
    <property type="match status" value="1"/>
</dbReference>
<dbReference type="PROSITE" id="PS51918">
    <property type="entry name" value="RADICAL_SAM"/>
    <property type="match status" value="1"/>
</dbReference>
<sequence length="282" mass="31448">MSDNKIYLCAISNIESGTCNEDCKFCTQSVKYKADIERYRRKEIEDIVNEAKKARANKAVGFCLVTAGTGLDDKRLDYVCRAADAVHKAVPDISLIACNGIASYEQLKELKKHGIENYNHNLETAREFYNEICTTHSWDDRYETCLNAKKAGLYLCTGGIFGLGETQENRISMLKSIASLEPMSVPINFFHPNDALPLVKNPLTKQEAFDLVKLARSYLPNQMLMIAGGRELMFGEEQYDVFKHGANALVVGDYLTTGGRDAQDDIDAVTALGYEIAFACHQ</sequence>
<organism>
    <name type="scientific">Aliarcobacter butzleri (strain RM4018)</name>
    <name type="common">Arcobacter butzleri</name>
    <dbReference type="NCBI Taxonomy" id="367737"/>
    <lineage>
        <taxon>Bacteria</taxon>
        <taxon>Pseudomonadati</taxon>
        <taxon>Campylobacterota</taxon>
        <taxon>Epsilonproteobacteria</taxon>
        <taxon>Campylobacterales</taxon>
        <taxon>Arcobacteraceae</taxon>
        <taxon>Aliarcobacter</taxon>
    </lineage>
</organism>
<reference key="1">
    <citation type="journal article" date="2007" name="PLoS ONE">
        <title>The complete genome sequence and analysis of the Epsilonproteobacterium Arcobacter butzleri.</title>
        <authorList>
            <person name="Miller W.G."/>
            <person name="Parker C.T."/>
            <person name="Rubenfield M."/>
            <person name="Mendz G.L."/>
            <person name="Woesten M.M.S.M."/>
            <person name="Ussery D.W."/>
            <person name="Stolz J.F."/>
            <person name="Binnewies T.T."/>
            <person name="Hallin P.F."/>
            <person name="Wang G."/>
            <person name="Malek J.A."/>
            <person name="Rogosin A."/>
            <person name="Stanker L.H."/>
            <person name="Mandrell R.E."/>
        </authorList>
    </citation>
    <scope>NUCLEOTIDE SEQUENCE [LARGE SCALE GENOMIC DNA]</scope>
    <source>
        <strain>RM4018</strain>
    </source>
</reference>